<gene>
    <name evidence="1" type="primary">hslO</name>
    <name type="ordered locus">YPO0139</name>
    <name type="ordered locus">y3919</name>
    <name type="ordered locus">YP_0140</name>
</gene>
<organism>
    <name type="scientific">Yersinia pestis</name>
    <dbReference type="NCBI Taxonomy" id="632"/>
    <lineage>
        <taxon>Bacteria</taxon>
        <taxon>Pseudomonadati</taxon>
        <taxon>Pseudomonadota</taxon>
        <taxon>Gammaproteobacteria</taxon>
        <taxon>Enterobacterales</taxon>
        <taxon>Yersiniaceae</taxon>
        <taxon>Yersinia</taxon>
    </lineage>
</organism>
<keyword id="KW-0143">Chaperone</keyword>
<keyword id="KW-0963">Cytoplasm</keyword>
<keyword id="KW-1015">Disulfide bond</keyword>
<keyword id="KW-0676">Redox-active center</keyword>
<keyword id="KW-1185">Reference proteome</keyword>
<keyword id="KW-0862">Zinc</keyword>
<proteinExistence type="inferred from homology"/>
<name>HSLO_YERPE</name>
<protein>
    <recommendedName>
        <fullName evidence="1">33 kDa chaperonin</fullName>
    </recommendedName>
    <alternativeName>
        <fullName evidence="1">Heat shock protein 33 homolog</fullName>
        <shortName evidence="1">HSP33</shortName>
    </alternativeName>
</protein>
<sequence length="293" mass="32478">MSNHDQLHRYLFANHAVRGELVSVNETYQQVLANHDYPPAVQKLLGEMLVATSLLTATLKFDGDITVQLQGGDGPLTLAVINGNNRQEMRGVARVKGEISDDSTLQEMVGNGYLVITITPAQGERYQGVVALEGETIAACLENYFMQSEQLPTRLFIRTGHVADKAAAGGMLLQVLPAQERNEDEFDHLAQLTATIKAEELFTLPANEVLYRLYHQEEVTLYEPQNVSFRCTCSRQRCADALVTLADDDVTEMLEQDGNIDMHCEYCGNHYLFDAVDIATLKNGNSASSEQIH</sequence>
<reference key="1">
    <citation type="journal article" date="2001" name="Nature">
        <title>Genome sequence of Yersinia pestis, the causative agent of plague.</title>
        <authorList>
            <person name="Parkhill J."/>
            <person name="Wren B.W."/>
            <person name="Thomson N.R."/>
            <person name="Titball R.W."/>
            <person name="Holden M.T.G."/>
            <person name="Prentice M.B."/>
            <person name="Sebaihia M."/>
            <person name="James K.D."/>
            <person name="Churcher C.M."/>
            <person name="Mungall K.L."/>
            <person name="Baker S."/>
            <person name="Basham D."/>
            <person name="Bentley S.D."/>
            <person name="Brooks K."/>
            <person name="Cerdeno-Tarraga A.-M."/>
            <person name="Chillingworth T."/>
            <person name="Cronin A."/>
            <person name="Davies R.M."/>
            <person name="Davis P."/>
            <person name="Dougan G."/>
            <person name="Feltwell T."/>
            <person name="Hamlin N."/>
            <person name="Holroyd S."/>
            <person name="Jagels K."/>
            <person name="Karlyshev A.V."/>
            <person name="Leather S."/>
            <person name="Moule S."/>
            <person name="Oyston P.C.F."/>
            <person name="Quail M.A."/>
            <person name="Rutherford K.M."/>
            <person name="Simmonds M."/>
            <person name="Skelton J."/>
            <person name="Stevens K."/>
            <person name="Whitehead S."/>
            <person name="Barrell B.G."/>
        </authorList>
    </citation>
    <scope>NUCLEOTIDE SEQUENCE [LARGE SCALE GENOMIC DNA]</scope>
    <source>
        <strain>CO-92 / Biovar Orientalis</strain>
    </source>
</reference>
<reference key="2">
    <citation type="journal article" date="2002" name="J. Bacteriol.">
        <title>Genome sequence of Yersinia pestis KIM.</title>
        <authorList>
            <person name="Deng W."/>
            <person name="Burland V."/>
            <person name="Plunkett G. III"/>
            <person name="Boutin A."/>
            <person name="Mayhew G.F."/>
            <person name="Liss P."/>
            <person name="Perna N.T."/>
            <person name="Rose D.J."/>
            <person name="Mau B."/>
            <person name="Zhou S."/>
            <person name="Schwartz D.C."/>
            <person name="Fetherston J.D."/>
            <person name="Lindler L.E."/>
            <person name="Brubaker R.R."/>
            <person name="Plano G.V."/>
            <person name="Straley S.C."/>
            <person name="McDonough K.A."/>
            <person name="Nilles M.L."/>
            <person name="Matson J.S."/>
            <person name="Blattner F.R."/>
            <person name="Perry R.D."/>
        </authorList>
    </citation>
    <scope>NUCLEOTIDE SEQUENCE [LARGE SCALE GENOMIC DNA]</scope>
    <source>
        <strain>KIM10+ / Biovar Mediaevalis</strain>
    </source>
</reference>
<reference key="3">
    <citation type="journal article" date="2004" name="DNA Res.">
        <title>Complete genome sequence of Yersinia pestis strain 91001, an isolate avirulent to humans.</title>
        <authorList>
            <person name="Song Y."/>
            <person name="Tong Z."/>
            <person name="Wang J."/>
            <person name="Wang L."/>
            <person name="Guo Z."/>
            <person name="Han Y."/>
            <person name="Zhang J."/>
            <person name="Pei D."/>
            <person name="Zhou D."/>
            <person name="Qin H."/>
            <person name="Pang X."/>
            <person name="Han Y."/>
            <person name="Zhai J."/>
            <person name="Li M."/>
            <person name="Cui B."/>
            <person name="Qi Z."/>
            <person name="Jin L."/>
            <person name="Dai R."/>
            <person name="Chen F."/>
            <person name="Li S."/>
            <person name="Ye C."/>
            <person name="Du Z."/>
            <person name="Lin W."/>
            <person name="Wang J."/>
            <person name="Yu J."/>
            <person name="Yang H."/>
            <person name="Wang J."/>
            <person name="Huang P."/>
            <person name="Yang R."/>
        </authorList>
    </citation>
    <scope>NUCLEOTIDE SEQUENCE [LARGE SCALE GENOMIC DNA]</scope>
    <source>
        <strain>91001 / Biovar Mediaevalis</strain>
    </source>
</reference>
<comment type="function">
    <text evidence="1">Redox regulated molecular chaperone. Protects both thermally unfolding and oxidatively damaged proteins from irreversible aggregation. Plays an important role in the bacterial defense system toward oxidative stress.</text>
</comment>
<comment type="subcellular location">
    <subcellularLocation>
        <location evidence="1">Cytoplasm</location>
    </subcellularLocation>
</comment>
<comment type="PTM">
    <text evidence="1">Under oxidizing conditions two disulfide bonds are formed involving the reactive cysteines. Under reducing conditions zinc is bound to the reactive cysteines and the protein is inactive.</text>
</comment>
<comment type="similarity">
    <text evidence="1">Belongs to the HSP33 family.</text>
</comment>
<dbReference type="EMBL" id="AL590842">
    <property type="protein sequence ID" value="CAL18825.1"/>
    <property type="molecule type" value="Genomic_DNA"/>
</dbReference>
<dbReference type="EMBL" id="AE009952">
    <property type="protein sequence ID" value="AAM87463.1"/>
    <property type="molecule type" value="Genomic_DNA"/>
</dbReference>
<dbReference type="EMBL" id="AE017042">
    <property type="protein sequence ID" value="AAS60418.1"/>
    <property type="molecule type" value="Genomic_DNA"/>
</dbReference>
<dbReference type="PIR" id="AH0017">
    <property type="entry name" value="AH0017"/>
</dbReference>
<dbReference type="RefSeq" id="WP_002208911.1">
    <property type="nucleotide sequence ID" value="NZ_WUCM01000004.1"/>
</dbReference>
<dbReference type="RefSeq" id="YP_002345225.1">
    <property type="nucleotide sequence ID" value="NC_003143.1"/>
</dbReference>
<dbReference type="SMR" id="Q8ZJG8"/>
<dbReference type="STRING" id="214092.YPO0139"/>
<dbReference type="PaxDb" id="214092-YPO0139"/>
<dbReference type="DNASU" id="1148866"/>
<dbReference type="EnsemblBacteria" id="AAS60418">
    <property type="protein sequence ID" value="AAS60418"/>
    <property type="gene ID" value="YP_0140"/>
</dbReference>
<dbReference type="GeneID" id="57974461"/>
<dbReference type="KEGG" id="ype:YPO0139"/>
<dbReference type="KEGG" id="ypk:y3919"/>
<dbReference type="KEGG" id="ypm:YP_0140"/>
<dbReference type="PATRIC" id="fig|1028802.3.peg.957"/>
<dbReference type="eggNOG" id="COG1281">
    <property type="taxonomic scope" value="Bacteria"/>
</dbReference>
<dbReference type="HOGENOM" id="CLU_054493_0_0_6"/>
<dbReference type="OMA" id="DMQCECC"/>
<dbReference type="OrthoDB" id="9793753at2"/>
<dbReference type="Proteomes" id="UP000000815">
    <property type="component" value="Chromosome"/>
</dbReference>
<dbReference type="Proteomes" id="UP000001019">
    <property type="component" value="Chromosome"/>
</dbReference>
<dbReference type="Proteomes" id="UP000002490">
    <property type="component" value="Chromosome"/>
</dbReference>
<dbReference type="GO" id="GO:0005737">
    <property type="term" value="C:cytoplasm"/>
    <property type="evidence" value="ECO:0000318"/>
    <property type="project" value="GO_Central"/>
</dbReference>
<dbReference type="GO" id="GO:0044183">
    <property type="term" value="F:protein folding chaperone"/>
    <property type="evidence" value="ECO:0000318"/>
    <property type="project" value="GO_Central"/>
</dbReference>
<dbReference type="GO" id="GO:0051082">
    <property type="term" value="F:unfolded protein binding"/>
    <property type="evidence" value="ECO:0007669"/>
    <property type="project" value="UniProtKB-UniRule"/>
</dbReference>
<dbReference type="GO" id="GO:0042026">
    <property type="term" value="P:protein refolding"/>
    <property type="evidence" value="ECO:0000318"/>
    <property type="project" value="GO_Central"/>
</dbReference>
<dbReference type="CDD" id="cd00498">
    <property type="entry name" value="Hsp33"/>
    <property type="match status" value="1"/>
</dbReference>
<dbReference type="Gene3D" id="1.10.287.480">
    <property type="entry name" value="helix hairpin bin"/>
    <property type="match status" value="1"/>
</dbReference>
<dbReference type="Gene3D" id="3.55.30.10">
    <property type="entry name" value="Hsp33 domain"/>
    <property type="match status" value="1"/>
</dbReference>
<dbReference type="Gene3D" id="3.90.1280.10">
    <property type="entry name" value="HSP33 redox switch-like"/>
    <property type="match status" value="1"/>
</dbReference>
<dbReference type="HAMAP" id="MF_00117">
    <property type="entry name" value="HslO"/>
    <property type="match status" value="1"/>
</dbReference>
<dbReference type="InterPro" id="IPR000397">
    <property type="entry name" value="Heat_shock_Hsp33"/>
</dbReference>
<dbReference type="InterPro" id="IPR016154">
    <property type="entry name" value="Heat_shock_Hsp33_C"/>
</dbReference>
<dbReference type="InterPro" id="IPR016153">
    <property type="entry name" value="Heat_shock_Hsp33_N"/>
</dbReference>
<dbReference type="InterPro" id="IPR023212">
    <property type="entry name" value="Hsp33_helix_hairpin_bin_dom_sf"/>
</dbReference>
<dbReference type="NCBIfam" id="NF001033">
    <property type="entry name" value="PRK00114.1"/>
    <property type="match status" value="1"/>
</dbReference>
<dbReference type="PANTHER" id="PTHR30111">
    <property type="entry name" value="33 KDA CHAPERONIN"/>
    <property type="match status" value="1"/>
</dbReference>
<dbReference type="PANTHER" id="PTHR30111:SF1">
    <property type="entry name" value="33 KDA CHAPERONIN"/>
    <property type="match status" value="1"/>
</dbReference>
<dbReference type="Pfam" id="PF01430">
    <property type="entry name" value="HSP33"/>
    <property type="match status" value="1"/>
</dbReference>
<dbReference type="PIRSF" id="PIRSF005261">
    <property type="entry name" value="Heat_shock_Hsp33"/>
    <property type="match status" value="1"/>
</dbReference>
<dbReference type="SUPFAM" id="SSF64397">
    <property type="entry name" value="Hsp33 domain"/>
    <property type="match status" value="1"/>
</dbReference>
<dbReference type="SUPFAM" id="SSF118352">
    <property type="entry name" value="HSP33 redox switch-like"/>
    <property type="match status" value="1"/>
</dbReference>
<feature type="chain" id="PRO_0000192226" description="33 kDa chaperonin">
    <location>
        <begin position="1"/>
        <end position="293"/>
    </location>
</feature>
<feature type="disulfide bond" description="Redox-active" evidence="1">
    <location>
        <begin position="231"/>
        <end position="233"/>
    </location>
</feature>
<feature type="disulfide bond" description="Redox-active" evidence="1">
    <location>
        <begin position="264"/>
        <end position="267"/>
    </location>
</feature>
<accession>Q8ZJG8</accession>
<accession>Q0WKG3</accession>
<evidence type="ECO:0000255" key="1">
    <source>
        <dbReference type="HAMAP-Rule" id="MF_00117"/>
    </source>
</evidence>